<feature type="chain" id="PRO_1000004992" description="Peptide chain release factor 2">
    <location>
        <begin position="1"/>
        <end position="365"/>
    </location>
</feature>
<feature type="modified residue" description="N5-methylglutamine" evidence="1">
    <location>
        <position position="251"/>
    </location>
</feature>
<sequence>MELSEIRNLLEGYSEKINGFRDSLDLDRLEEEIALLENDMAQPEFWNDQAAAQKVIDESNALKAKYDNYQAMNTMLEEAQTMLEMLQEEADEDMQVELEEMTTALGQKIESYELEIMLNQPYDHMNAVLEIHPGSGGTESQDWGSMLMRMYTRWGEAHGFKVEILDYQDGDVAGLKSVAIRFVGRNAYGFLRGEKGVHRLVRISPFDSANRRHTSFTSVDVMPELDDSIEVEVRDADVKMDTFRSGGAGGQNVNKVSTGVRLTHVPTGIVVQSTMDRTQYGNRDKAMAMLKSKLYQLEMDKKQAEVDELRGDQSEISWGSQIRSYVFMPYQLVKDTRTGYETGQISNVMDGEIDGFINAYLRWNL</sequence>
<proteinExistence type="inferred from homology"/>
<gene>
    <name evidence="1" type="primary">prfB</name>
    <name type="ordered locus">llmg_1547</name>
</gene>
<organism>
    <name type="scientific">Lactococcus lactis subsp. cremoris (strain MG1363)</name>
    <dbReference type="NCBI Taxonomy" id="416870"/>
    <lineage>
        <taxon>Bacteria</taxon>
        <taxon>Bacillati</taxon>
        <taxon>Bacillota</taxon>
        <taxon>Bacilli</taxon>
        <taxon>Lactobacillales</taxon>
        <taxon>Streptococcaceae</taxon>
        <taxon>Lactococcus</taxon>
        <taxon>Lactococcus cremoris subsp. cremoris</taxon>
    </lineage>
</organism>
<comment type="function">
    <text evidence="1">Peptide chain release factor 2 directs the termination of translation in response to the peptide chain termination codons UGA and UAA.</text>
</comment>
<comment type="subcellular location">
    <subcellularLocation>
        <location evidence="1">Cytoplasm</location>
    </subcellularLocation>
</comment>
<comment type="PTM">
    <text evidence="1">Methylated by PrmC. Methylation increases the termination efficiency of RF2.</text>
</comment>
<comment type="similarity">
    <text evidence="1">Belongs to the prokaryotic/mitochondrial release factor family.</text>
</comment>
<protein>
    <recommendedName>
        <fullName evidence="1">Peptide chain release factor 2</fullName>
        <shortName evidence="1">RF-2</shortName>
    </recommendedName>
</protein>
<keyword id="KW-0963">Cytoplasm</keyword>
<keyword id="KW-0488">Methylation</keyword>
<keyword id="KW-0648">Protein biosynthesis</keyword>
<accession>A2RLF5</accession>
<reference key="1">
    <citation type="journal article" date="2007" name="J. Bacteriol.">
        <title>The complete genome sequence of the lactic acid bacterial paradigm Lactococcus lactis subsp. cremoris MG1363.</title>
        <authorList>
            <person name="Wegmann U."/>
            <person name="O'Connell-Motherway M."/>
            <person name="Zomer A."/>
            <person name="Buist G."/>
            <person name="Shearman C."/>
            <person name="Canchaya C."/>
            <person name="Ventura M."/>
            <person name="Goesmann A."/>
            <person name="Gasson M.J."/>
            <person name="Kuipers O.P."/>
            <person name="van Sinderen D."/>
            <person name="Kok J."/>
        </authorList>
    </citation>
    <scope>NUCLEOTIDE SEQUENCE [LARGE SCALE GENOMIC DNA]</scope>
    <source>
        <strain>MG1363</strain>
    </source>
</reference>
<dbReference type="EMBL" id="AM406671">
    <property type="protein sequence ID" value="CAL98122.1"/>
    <property type="molecule type" value="Genomic_DNA"/>
</dbReference>
<dbReference type="RefSeq" id="WP_011835386.1">
    <property type="nucleotide sequence ID" value="NC_009004.1"/>
</dbReference>
<dbReference type="SMR" id="A2RLF5"/>
<dbReference type="STRING" id="416870.llmg_1547"/>
<dbReference type="KEGG" id="llm:llmg_1547"/>
<dbReference type="eggNOG" id="COG1186">
    <property type="taxonomic scope" value="Bacteria"/>
</dbReference>
<dbReference type="HOGENOM" id="CLU_036856_6_0_9"/>
<dbReference type="OrthoDB" id="9806673at2"/>
<dbReference type="PhylomeDB" id="A2RLF5"/>
<dbReference type="Proteomes" id="UP000000364">
    <property type="component" value="Chromosome"/>
</dbReference>
<dbReference type="GO" id="GO:0005737">
    <property type="term" value="C:cytoplasm"/>
    <property type="evidence" value="ECO:0007669"/>
    <property type="project" value="UniProtKB-SubCell"/>
</dbReference>
<dbReference type="GO" id="GO:0016149">
    <property type="term" value="F:translation release factor activity, codon specific"/>
    <property type="evidence" value="ECO:0007669"/>
    <property type="project" value="UniProtKB-UniRule"/>
</dbReference>
<dbReference type="Gene3D" id="3.30.160.20">
    <property type="match status" value="1"/>
</dbReference>
<dbReference type="Gene3D" id="3.30.70.1660">
    <property type="match status" value="1"/>
</dbReference>
<dbReference type="Gene3D" id="1.20.58.410">
    <property type="entry name" value="Release factor"/>
    <property type="match status" value="1"/>
</dbReference>
<dbReference type="HAMAP" id="MF_00094">
    <property type="entry name" value="Rel_fac_2"/>
    <property type="match status" value="1"/>
</dbReference>
<dbReference type="InterPro" id="IPR005139">
    <property type="entry name" value="PCRF"/>
</dbReference>
<dbReference type="InterPro" id="IPR000352">
    <property type="entry name" value="Pep_chain_release_fac_I"/>
</dbReference>
<dbReference type="InterPro" id="IPR045853">
    <property type="entry name" value="Pep_chain_release_fac_I_sf"/>
</dbReference>
<dbReference type="InterPro" id="IPR004374">
    <property type="entry name" value="PrfB"/>
</dbReference>
<dbReference type="NCBIfam" id="TIGR00020">
    <property type="entry name" value="prfB"/>
    <property type="match status" value="1"/>
</dbReference>
<dbReference type="PANTHER" id="PTHR43116:SF3">
    <property type="entry name" value="CLASS I PEPTIDE CHAIN RELEASE FACTOR"/>
    <property type="match status" value="1"/>
</dbReference>
<dbReference type="PANTHER" id="PTHR43116">
    <property type="entry name" value="PEPTIDE CHAIN RELEASE FACTOR 2"/>
    <property type="match status" value="1"/>
</dbReference>
<dbReference type="Pfam" id="PF03462">
    <property type="entry name" value="PCRF"/>
    <property type="match status" value="1"/>
</dbReference>
<dbReference type="Pfam" id="PF00472">
    <property type="entry name" value="RF-1"/>
    <property type="match status" value="1"/>
</dbReference>
<dbReference type="SMART" id="SM00937">
    <property type="entry name" value="PCRF"/>
    <property type="match status" value="1"/>
</dbReference>
<dbReference type="SUPFAM" id="SSF75620">
    <property type="entry name" value="Release factor"/>
    <property type="match status" value="1"/>
</dbReference>
<dbReference type="PROSITE" id="PS00745">
    <property type="entry name" value="RF_PROK_I"/>
    <property type="match status" value="1"/>
</dbReference>
<name>RF2_LACLM</name>
<evidence type="ECO:0000255" key="1">
    <source>
        <dbReference type="HAMAP-Rule" id="MF_00094"/>
    </source>
</evidence>